<protein>
    <recommendedName>
        <fullName evidence="8">Profilin Sal k 4.0301</fullName>
    </recommendedName>
    <alternativeName>
        <fullName evidence="7">Allergen Sal k 4.03</fullName>
    </alternativeName>
    <allergenName evidence="8">Sal k 4.0301</allergenName>
</protein>
<comment type="function">
    <text evidence="4">Binds to actin and affects the structure of the cytoskeleton. At high concentrations, profilin prevents the polymerization of actin, whereas it enhances it at low concentrations.</text>
</comment>
<comment type="subunit">
    <text evidence="4">Occurs in many kinds of cells as a complex with monomeric actin in a 1:1 ratio.</text>
</comment>
<comment type="subcellular location">
    <subcellularLocation>
        <location evidence="1">Cytoplasm</location>
        <location evidence="1">Cytoskeleton</location>
    </subcellularLocation>
</comment>
<comment type="tissue specificity">
    <text evidence="6">Expressed in pollen (at protein and mRNA level).</text>
</comment>
<comment type="allergen">
    <text evidence="6">Causes an allergic reaction in human. Binds to IgE in 29% of the 165 Spanish patients tested allergic to S.kali and/or C.album pollen.</text>
</comment>
<comment type="similarity">
    <text evidence="3 5 8">Belongs to the profilin family.</text>
</comment>
<reference evidence="9" key="1">
    <citation type="journal article" date="2012" name="FEBS J.">
        <title>The natural profilin from Russian thistle (Salsola kali) contains a low IgE-binding ability isoform--molecular and immunological characterization.</title>
        <authorList>
            <person name="Mas S."/>
            <person name="Barderas R."/>
            <person name="Colas C."/>
            <person name="Quiralte J."/>
            <person name="Rodriguez R."/>
            <person name="Villalba M."/>
        </authorList>
    </citation>
    <scope>NUCLEOTIDE SEQUENCE [MRNA]</scope>
    <scope>3D-STRUCTURE MODELING</scope>
    <scope>TISSUE SPECIFICITY</scope>
    <scope>ALLERGEN</scope>
    <source>
        <tissue evidence="7">Pollen</tissue>
    </source>
</reference>
<proteinExistence type="evidence at protein level"/>
<dbReference type="EMBL" id="KC920920">
    <property type="protein sequence ID" value="AHL24658.1"/>
    <property type="molecule type" value="mRNA"/>
</dbReference>
<dbReference type="SMR" id="W8P570"/>
<dbReference type="GO" id="GO:0005938">
    <property type="term" value="C:cell cortex"/>
    <property type="evidence" value="ECO:0007669"/>
    <property type="project" value="TreeGrafter"/>
</dbReference>
<dbReference type="GO" id="GO:0005856">
    <property type="term" value="C:cytoskeleton"/>
    <property type="evidence" value="ECO:0000250"/>
    <property type="project" value="UniProtKB"/>
</dbReference>
<dbReference type="GO" id="GO:0003785">
    <property type="term" value="F:actin monomer binding"/>
    <property type="evidence" value="ECO:0007669"/>
    <property type="project" value="TreeGrafter"/>
</dbReference>
<dbReference type="CDD" id="cd00148">
    <property type="entry name" value="PROF"/>
    <property type="match status" value="1"/>
</dbReference>
<dbReference type="FunFam" id="3.30.450.30:FF:000001">
    <property type="entry name" value="Profilin"/>
    <property type="match status" value="1"/>
</dbReference>
<dbReference type="Gene3D" id="3.30.450.30">
    <property type="entry name" value="Dynein light chain 2a, cytoplasmic"/>
    <property type="match status" value="1"/>
</dbReference>
<dbReference type="InterPro" id="IPR048278">
    <property type="entry name" value="PFN"/>
</dbReference>
<dbReference type="InterPro" id="IPR005455">
    <property type="entry name" value="PFN_euk"/>
</dbReference>
<dbReference type="InterPro" id="IPR036140">
    <property type="entry name" value="PFN_sf"/>
</dbReference>
<dbReference type="InterPro" id="IPR027310">
    <property type="entry name" value="Profilin_CS"/>
</dbReference>
<dbReference type="PANTHER" id="PTHR11604">
    <property type="entry name" value="PROFILIN"/>
    <property type="match status" value="1"/>
</dbReference>
<dbReference type="PANTHER" id="PTHR11604:SF35">
    <property type="entry name" value="PROFILIN-3"/>
    <property type="match status" value="1"/>
</dbReference>
<dbReference type="Pfam" id="PF00235">
    <property type="entry name" value="Profilin"/>
    <property type="match status" value="1"/>
</dbReference>
<dbReference type="PRINTS" id="PR00392">
    <property type="entry name" value="PROFILIN"/>
</dbReference>
<dbReference type="PRINTS" id="PR01640">
    <property type="entry name" value="PROFILINPLNT"/>
</dbReference>
<dbReference type="SMART" id="SM00392">
    <property type="entry name" value="PROF"/>
    <property type="match status" value="1"/>
</dbReference>
<dbReference type="SUPFAM" id="SSF55770">
    <property type="entry name" value="Profilin (actin-binding protein)"/>
    <property type="match status" value="1"/>
</dbReference>
<dbReference type="PROSITE" id="PS00414">
    <property type="entry name" value="PROFILIN"/>
    <property type="match status" value="1"/>
</dbReference>
<sequence>MSWQAYVDDHLMCEIEGTNNHLTAAAILGVDGSVWAQSANFPQFKPDEISAVVKEFDEAGTLAPTGLHLGGTKYMVIQSEAGQVIRGKKGPGGICVKKTGQALIFGIYDEPVTPGQCNMIVERLGDYLIEQGL</sequence>
<name>PRF03_KALTU</name>
<organism evidence="9">
    <name type="scientific">Kali turgidum</name>
    <name type="common">Prickly saltwort</name>
    <name type="synonym">Salsola kali</name>
    <dbReference type="NCBI Taxonomy" id="151250"/>
    <lineage>
        <taxon>Eukaryota</taxon>
        <taxon>Viridiplantae</taxon>
        <taxon>Streptophyta</taxon>
        <taxon>Embryophyta</taxon>
        <taxon>Tracheophyta</taxon>
        <taxon>Spermatophyta</taxon>
        <taxon>Magnoliopsida</taxon>
        <taxon>eudicotyledons</taxon>
        <taxon>Gunneridae</taxon>
        <taxon>Pentapetalae</taxon>
        <taxon>Caryophyllales</taxon>
        <taxon>Chenopodiaceae</taxon>
        <taxon>Salsoloideae</taxon>
        <taxon>Salsoleae</taxon>
        <taxon>Kali</taxon>
    </lineage>
</organism>
<evidence type="ECO:0000250" key="1">
    <source>
        <dbReference type="UniProtKB" id="P35081"/>
    </source>
</evidence>
<evidence type="ECO:0000250" key="2">
    <source>
        <dbReference type="UniProtKB" id="Q8H2C9"/>
    </source>
</evidence>
<evidence type="ECO:0000255" key="3"/>
<evidence type="ECO:0000255" key="4">
    <source>
        <dbReference type="RuleBase" id="RU003908"/>
    </source>
</evidence>
<evidence type="ECO:0000255" key="5">
    <source>
        <dbReference type="RuleBase" id="RU003909"/>
    </source>
</evidence>
<evidence type="ECO:0000269" key="6">
    <source>
    </source>
</evidence>
<evidence type="ECO:0000303" key="7">
    <source>
    </source>
</evidence>
<evidence type="ECO:0000305" key="8"/>
<evidence type="ECO:0000312" key="9">
    <source>
        <dbReference type="EMBL" id="AHL24658.1"/>
    </source>
</evidence>
<accession>W8P570</accession>
<feature type="chain" id="PRO_0000447667" description="Profilin Sal k 4.0301">
    <location>
        <begin position="1"/>
        <end position="133"/>
    </location>
</feature>
<feature type="disulfide bond" evidence="2">
    <location>
        <begin position="95"/>
        <end position="117"/>
    </location>
</feature>
<keyword id="KW-0009">Actin-binding</keyword>
<keyword id="KW-0020">Allergen</keyword>
<keyword id="KW-0963">Cytoplasm</keyword>
<keyword id="KW-0206">Cytoskeleton</keyword>
<keyword id="KW-1015">Disulfide bond</keyword>